<name>TXU45_MEGOP</name>
<organism>
    <name type="scientific">Megalopyge opercularis</name>
    <name type="common">Southern flannel moth</name>
    <name type="synonym">Phalaena opercularis</name>
    <dbReference type="NCBI Taxonomy" id="1113279"/>
    <lineage>
        <taxon>Eukaryota</taxon>
        <taxon>Metazoa</taxon>
        <taxon>Ecdysozoa</taxon>
        <taxon>Arthropoda</taxon>
        <taxon>Hexapoda</taxon>
        <taxon>Insecta</taxon>
        <taxon>Pterygota</taxon>
        <taxon>Neoptera</taxon>
        <taxon>Endopterygota</taxon>
        <taxon>Lepidoptera</taxon>
        <taxon>Glossata</taxon>
        <taxon>Ditrysia</taxon>
        <taxon>Zygaenoidea</taxon>
        <taxon>Megalopygidae</taxon>
        <taxon>Megalopyge</taxon>
    </lineage>
</organism>
<proteinExistence type="evidence at protein level"/>
<comment type="function">
    <text evidence="4">Probable toxin.</text>
</comment>
<comment type="subcellular location">
    <subcellularLocation>
        <location evidence="2">Secreted</location>
    </subcellularLocation>
</comment>
<comment type="tissue specificity">
    <text evidence="2">Expressed by the venom apparatus.</text>
</comment>
<comment type="developmental stage">
    <text evidence="2">Larvae.</text>
</comment>
<comment type="mass spectrometry">
    <text>Monoisotopic mass.</text>
</comment>
<comment type="similarity">
    <text evidence="4">Belongs to the caterpillar 4 family.</text>
</comment>
<feature type="signal peptide" evidence="1">
    <location>
        <begin position="1"/>
        <end position="23"/>
    </location>
</feature>
<feature type="peptide" id="PRO_0000461524" description="U-megalopygitoxin(4)-Mo5" evidence="5">
    <location>
        <begin position="24"/>
        <end position="40"/>
    </location>
</feature>
<dbReference type="EMBL" id="OP514850">
    <property type="protein sequence ID" value="WJJ70368.1"/>
    <property type="molecule type" value="mRNA"/>
</dbReference>
<dbReference type="GO" id="GO:0005576">
    <property type="term" value="C:extracellular region"/>
    <property type="evidence" value="ECO:0007669"/>
    <property type="project" value="UniProtKB-SubCell"/>
</dbReference>
<dbReference type="GO" id="GO:0090729">
    <property type="term" value="F:toxin activity"/>
    <property type="evidence" value="ECO:0007669"/>
    <property type="project" value="UniProtKB-KW"/>
</dbReference>
<keyword id="KW-0964">Secreted</keyword>
<keyword id="KW-0732">Signal</keyword>
<keyword id="KW-0800">Toxin</keyword>
<sequence>MKCSLLLVVFAAMVALFAAGTNAAMNQRKMLEVIGGLKKEK</sequence>
<protein>
    <recommendedName>
        <fullName evidence="3">U-megalopygitoxin(4)-Mo5</fullName>
        <shortName evidence="3">U-MPTX(4)-Mo5</shortName>
        <shortName evidence="6">U-MPTX.4-5</shortName>
    </recommendedName>
</protein>
<evidence type="ECO:0000255" key="1"/>
<evidence type="ECO:0000269" key="2">
    <source>
    </source>
</evidence>
<evidence type="ECO:0000303" key="3">
    <source>
    </source>
</evidence>
<evidence type="ECO:0000305" key="4"/>
<evidence type="ECO:0000305" key="5">
    <source>
    </source>
</evidence>
<evidence type="ECO:0000312" key="6">
    <source>
        <dbReference type="EMBL" id="WJJ70368.1"/>
    </source>
</evidence>
<reference key="1">
    <citation type="journal article" date="2023" name="Proc. Natl. Acad. Sci. U.S.A.">
        <title>Horizontal gene transfer underlies the painful stings of asp caterpillars (Lepidoptera: Megalopygidae).</title>
        <authorList>
            <person name="Walker A.A."/>
            <person name="Robinson S.D."/>
            <person name="Merritt D.J."/>
            <person name="Cardoso F.C."/>
            <person name="Goudarzi M.H."/>
            <person name="Mercedes R.S."/>
            <person name="Eagles D.A."/>
            <person name="Cooper P."/>
            <person name="Zdenek C.N."/>
            <person name="Fry B.G."/>
            <person name="Hall D.W."/>
            <person name="Vetter I."/>
            <person name="King G.F."/>
        </authorList>
    </citation>
    <scope>NUCLEOTIDE SEQUENCE [MRNA]</scope>
    <scope>MASS SPECTROMETRY</scope>
    <scope>SYNTHESIS OF 24-40</scope>
    <scope>SUBCELLULAR LOCATION</scope>
    <scope>TISSUE SPECIFICITY</scope>
    <scope>DEVELOPMENTAL STAGE</scope>
    <source>
        <tissue>Venom</tissue>
    </source>
</reference>
<accession>P0DXW6</accession>